<keyword id="KW-0312">Gluconeogenesis</keyword>
<keyword id="KW-0324">Glycolysis</keyword>
<keyword id="KW-0413">Isomerase</keyword>
<gene>
    <name evidence="1" type="primary">gpmA</name>
    <name type="ordered locus">BCE33L2234</name>
</gene>
<evidence type="ECO:0000255" key="1">
    <source>
        <dbReference type="HAMAP-Rule" id="MF_01039"/>
    </source>
</evidence>
<dbReference type="EC" id="5.4.2.11" evidence="1"/>
<dbReference type="EMBL" id="CP000001">
    <property type="protein sequence ID" value="AAU18024.1"/>
    <property type="molecule type" value="Genomic_DNA"/>
</dbReference>
<dbReference type="RefSeq" id="WP_000594155.1">
    <property type="nucleotide sequence ID" value="NC_006274.1"/>
</dbReference>
<dbReference type="SMR" id="Q63B92"/>
<dbReference type="KEGG" id="bcz:BCE33L2234"/>
<dbReference type="PATRIC" id="fig|288681.22.peg.3269"/>
<dbReference type="UniPathway" id="UPA00109">
    <property type="reaction ID" value="UER00186"/>
</dbReference>
<dbReference type="Proteomes" id="UP000002612">
    <property type="component" value="Chromosome"/>
</dbReference>
<dbReference type="GO" id="GO:0004619">
    <property type="term" value="F:phosphoglycerate mutase activity"/>
    <property type="evidence" value="ECO:0007669"/>
    <property type="project" value="UniProtKB-EC"/>
</dbReference>
<dbReference type="GO" id="GO:0006094">
    <property type="term" value="P:gluconeogenesis"/>
    <property type="evidence" value="ECO:0007669"/>
    <property type="project" value="UniProtKB-UniRule"/>
</dbReference>
<dbReference type="GO" id="GO:0006096">
    <property type="term" value="P:glycolytic process"/>
    <property type="evidence" value="ECO:0007669"/>
    <property type="project" value="UniProtKB-UniRule"/>
</dbReference>
<dbReference type="CDD" id="cd07067">
    <property type="entry name" value="HP_PGM_like"/>
    <property type="match status" value="1"/>
</dbReference>
<dbReference type="FunFam" id="3.40.50.1240:FF:000003">
    <property type="entry name" value="2,3-bisphosphoglycerate-dependent phosphoglycerate mutase"/>
    <property type="match status" value="1"/>
</dbReference>
<dbReference type="Gene3D" id="3.40.50.1240">
    <property type="entry name" value="Phosphoglycerate mutase-like"/>
    <property type="match status" value="1"/>
</dbReference>
<dbReference type="HAMAP" id="MF_01039">
    <property type="entry name" value="PGAM_GpmA"/>
    <property type="match status" value="1"/>
</dbReference>
<dbReference type="InterPro" id="IPR013078">
    <property type="entry name" value="His_Pase_superF_clade-1"/>
</dbReference>
<dbReference type="InterPro" id="IPR029033">
    <property type="entry name" value="His_PPase_superfam"/>
</dbReference>
<dbReference type="InterPro" id="IPR001345">
    <property type="entry name" value="PG/BPGM_mutase_AS"/>
</dbReference>
<dbReference type="InterPro" id="IPR005952">
    <property type="entry name" value="Phosphogly_mut1"/>
</dbReference>
<dbReference type="NCBIfam" id="TIGR01258">
    <property type="entry name" value="pgm_1"/>
    <property type="match status" value="1"/>
</dbReference>
<dbReference type="NCBIfam" id="NF010713">
    <property type="entry name" value="PRK14115.1"/>
    <property type="match status" value="1"/>
</dbReference>
<dbReference type="PANTHER" id="PTHR11931">
    <property type="entry name" value="PHOSPHOGLYCERATE MUTASE"/>
    <property type="match status" value="1"/>
</dbReference>
<dbReference type="Pfam" id="PF00300">
    <property type="entry name" value="His_Phos_1"/>
    <property type="match status" value="1"/>
</dbReference>
<dbReference type="PIRSF" id="PIRSF000709">
    <property type="entry name" value="6PFK_2-Ptase"/>
    <property type="match status" value="1"/>
</dbReference>
<dbReference type="SMART" id="SM00855">
    <property type="entry name" value="PGAM"/>
    <property type="match status" value="1"/>
</dbReference>
<dbReference type="SUPFAM" id="SSF53254">
    <property type="entry name" value="Phosphoglycerate mutase-like"/>
    <property type="match status" value="1"/>
</dbReference>
<dbReference type="PROSITE" id="PS00175">
    <property type="entry name" value="PG_MUTASE"/>
    <property type="match status" value="1"/>
</dbReference>
<comment type="function">
    <text evidence="1">Catalyzes the interconversion of 2-phosphoglycerate and 3-phosphoglycerate.</text>
</comment>
<comment type="catalytic activity">
    <reaction evidence="1">
        <text>(2R)-2-phosphoglycerate = (2R)-3-phosphoglycerate</text>
        <dbReference type="Rhea" id="RHEA:15901"/>
        <dbReference type="ChEBI" id="CHEBI:58272"/>
        <dbReference type="ChEBI" id="CHEBI:58289"/>
        <dbReference type="EC" id="5.4.2.11"/>
    </reaction>
</comment>
<comment type="pathway">
    <text evidence="1">Carbohydrate degradation; glycolysis; pyruvate from D-glyceraldehyde 3-phosphate: step 3/5.</text>
</comment>
<comment type="similarity">
    <text evidence="1">Belongs to the phosphoglycerate mutase family. BPG-dependent PGAM subfamily.</text>
</comment>
<reference key="1">
    <citation type="journal article" date="2006" name="J. Bacteriol.">
        <title>Pathogenomic sequence analysis of Bacillus cereus and Bacillus thuringiensis isolates closely related to Bacillus anthracis.</title>
        <authorList>
            <person name="Han C.S."/>
            <person name="Xie G."/>
            <person name="Challacombe J.F."/>
            <person name="Altherr M.R."/>
            <person name="Bhotika S.S."/>
            <person name="Bruce D."/>
            <person name="Campbell C.S."/>
            <person name="Campbell M.L."/>
            <person name="Chen J."/>
            <person name="Chertkov O."/>
            <person name="Cleland C."/>
            <person name="Dimitrijevic M."/>
            <person name="Doggett N.A."/>
            <person name="Fawcett J.J."/>
            <person name="Glavina T."/>
            <person name="Goodwin L.A."/>
            <person name="Hill K.K."/>
            <person name="Hitchcock P."/>
            <person name="Jackson P.J."/>
            <person name="Keim P."/>
            <person name="Kewalramani A.R."/>
            <person name="Longmire J."/>
            <person name="Lucas S."/>
            <person name="Malfatti S."/>
            <person name="McMurry K."/>
            <person name="Meincke L.J."/>
            <person name="Misra M."/>
            <person name="Moseman B.L."/>
            <person name="Mundt M."/>
            <person name="Munk A.C."/>
            <person name="Okinaka R.T."/>
            <person name="Parson-Quintana B."/>
            <person name="Reilly L.P."/>
            <person name="Richardson P."/>
            <person name="Robinson D.L."/>
            <person name="Rubin E."/>
            <person name="Saunders E."/>
            <person name="Tapia R."/>
            <person name="Tesmer J.G."/>
            <person name="Thayer N."/>
            <person name="Thompson L.S."/>
            <person name="Tice H."/>
            <person name="Ticknor L.O."/>
            <person name="Wills P.L."/>
            <person name="Brettin T.S."/>
            <person name="Gilna P."/>
        </authorList>
    </citation>
    <scope>NUCLEOTIDE SEQUENCE [LARGE SCALE GENOMIC DNA]</scope>
    <source>
        <strain>ZK / E33L</strain>
    </source>
</reference>
<sequence>MIKLVLIRHGQSLWNLENRFTGWTDVDLSENGLSEAREAGAILKKNGYTFDVAYTSVLKRAIRTLWIVLHEMNLAWVPVHKSWKLNERHYGALQGLNKDETAQKYGEEQVHIWRRSIDVRPPALTEDDPRYEMNDPRYKALKKGEFPLTECLVDTEKRVLDYWHSEIAPKLKNGNKVIISSHGNTIRSLVKYLDNLSSDGVVSLNIPTSIPLVYELDENLRPIRHYYLSMDGEVPEGEIPKHISF</sequence>
<feature type="chain" id="PRO_0000229102" description="2,3-bisphosphoglycerate-dependent phosphoglycerate mutase">
    <location>
        <begin position="1"/>
        <end position="245"/>
    </location>
</feature>
<feature type="active site" description="Tele-phosphohistidine intermediate" evidence="1">
    <location>
        <position position="9"/>
    </location>
</feature>
<feature type="active site" description="Proton donor/acceptor" evidence="1">
    <location>
        <position position="87"/>
    </location>
</feature>
<feature type="binding site" evidence="1">
    <location>
        <begin position="8"/>
        <end position="15"/>
    </location>
    <ligand>
        <name>substrate</name>
    </ligand>
</feature>
<feature type="binding site" evidence="1">
    <location>
        <begin position="21"/>
        <end position="22"/>
    </location>
    <ligand>
        <name>substrate</name>
    </ligand>
</feature>
<feature type="binding site" evidence="1">
    <location>
        <position position="60"/>
    </location>
    <ligand>
        <name>substrate</name>
    </ligand>
</feature>
<feature type="binding site" evidence="1">
    <location>
        <begin position="87"/>
        <end position="90"/>
    </location>
    <ligand>
        <name>substrate</name>
    </ligand>
</feature>
<feature type="binding site" evidence="1">
    <location>
        <position position="98"/>
    </location>
    <ligand>
        <name>substrate</name>
    </ligand>
</feature>
<feature type="binding site" evidence="1">
    <location>
        <begin position="114"/>
        <end position="115"/>
    </location>
    <ligand>
        <name>substrate</name>
    </ligand>
</feature>
<feature type="binding site" evidence="1">
    <location>
        <begin position="183"/>
        <end position="184"/>
    </location>
    <ligand>
        <name>substrate</name>
    </ligand>
</feature>
<feature type="site" description="Transition state stabilizer" evidence="1">
    <location>
        <position position="182"/>
    </location>
</feature>
<accession>Q63B92</accession>
<name>GPMA_BACCZ</name>
<organism>
    <name type="scientific">Bacillus cereus (strain ZK / E33L)</name>
    <dbReference type="NCBI Taxonomy" id="288681"/>
    <lineage>
        <taxon>Bacteria</taxon>
        <taxon>Bacillati</taxon>
        <taxon>Bacillota</taxon>
        <taxon>Bacilli</taxon>
        <taxon>Bacillales</taxon>
        <taxon>Bacillaceae</taxon>
        <taxon>Bacillus</taxon>
        <taxon>Bacillus cereus group</taxon>
    </lineage>
</organism>
<protein>
    <recommendedName>
        <fullName evidence="1">2,3-bisphosphoglycerate-dependent phosphoglycerate mutase</fullName>
        <shortName evidence="1">BPG-dependent PGAM</shortName>
        <shortName evidence="1">PGAM</shortName>
        <shortName evidence="1">Phosphoglyceromutase</shortName>
        <shortName evidence="1">dPGM</shortName>
        <ecNumber evidence="1">5.4.2.11</ecNumber>
    </recommendedName>
</protein>
<proteinExistence type="inferred from homology"/>